<organism>
    <name type="scientific">Shouchella clausii (strain KSM-K16)</name>
    <name type="common">Alkalihalobacillus clausii</name>
    <dbReference type="NCBI Taxonomy" id="66692"/>
    <lineage>
        <taxon>Bacteria</taxon>
        <taxon>Bacillati</taxon>
        <taxon>Bacillota</taxon>
        <taxon>Bacilli</taxon>
        <taxon>Bacillales</taxon>
        <taxon>Bacillaceae</taxon>
        <taxon>Shouchella</taxon>
    </lineage>
</organism>
<reference key="1">
    <citation type="submission" date="2003-10" db="EMBL/GenBank/DDBJ databases">
        <title>The complete genome sequence of the alkaliphilic Bacillus clausii KSM-K16.</title>
        <authorList>
            <person name="Takaki Y."/>
            <person name="Kageyama Y."/>
            <person name="Shimamura S."/>
            <person name="Suzuki H."/>
            <person name="Nishi S."/>
            <person name="Hatada Y."/>
            <person name="Kawai S."/>
            <person name="Ito S."/>
            <person name="Horikoshi K."/>
        </authorList>
    </citation>
    <scope>NUCLEOTIDE SEQUENCE [LARGE SCALE GENOMIC DNA]</scope>
    <source>
        <strain>KSM-K16</strain>
    </source>
</reference>
<name>PHNC_SHOC1</name>
<feature type="chain" id="PRO_0000092696" description="Phosphonates import ATP-binding protein PhnC">
    <location>
        <begin position="1"/>
        <end position="266"/>
    </location>
</feature>
<feature type="domain" description="ABC transporter" evidence="1">
    <location>
        <begin position="2"/>
        <end position="246"/>
    </location>
</feature>
<feature type="binding site" evidence="1">
    <location>
        <begin position="35"/>
        <end position="42"/>
    </location>
    <ligand>
        <name>ATP</name>
        <dbReference type="ChEBI" id="CHEBI:30616"/>
    </ligand>
</feature>
<gene>
    <name evidence="1" type="primary">phnC</name>
    <name type="ordered locus">ABC1250</name>
</gene>
<comment type="function">
    <text evidence="1">Part of the ABC transporter complex PhnCDE involved in phosphonates import. Responsible for energy coupling to the transport system.</text>
</comment>
<comment type="catalytic activity">
    <reaction evidence="1">
        <text>phosphonate(out) + ATP + H2O = phosphonate(in) + ADP + phosphate + H(+)</text>
        <dbReference type="Rhea" id="RHEA:18065"/>
        <dbReference type="ChEBI" id="CHEBI:15377"/>
        <dbReference type="ChEBI" id="CHEBI:15378"/>
        <dbReference type="ChEBI" id="CHEBI:16215"/>
        <dbReference type="ChEBI" id="CHEBI:30616"/>
        <dbReference type="ChEBI" id="CHEBI:43474"/>
        <dbReference type="ChEBI" id="CHEBI:456216"/>
        <dbReference type="EC" id="7.3.2.2"/>
    </reaction>
</comment>
<comment type="subunit">
    <text evidence="1">The complex is composed of two ATP-binding proteins (PhnC), two transmembrane proteins (PhnE) and a solute-binding protein (PhnD).</text>
</comment>
<comment type="subcellular location">
    <subcellularLocation>
        <location evidence="1">Cell membrane</location>
        <topology evidence="1">Peripheral membrane protein</topology>
    </subcellularLocation>
</comment>
<comment type="similarity">
    <text evidence="1">Belongs to the ABC transporter superfamily. Phosphonates importer (TC 3.A.1.9.1) family.</text>
</comment>
<proteinExistence type="inferred from homology"/>
<sequence length="266" mass="29423">MIEIKNVSKTYPNGTKGLKNIDLTIERGEFVVVVGLSGAGKSTLLRSINRLNEITDGEILIDGLSITKAKGKELRQIRQRTAMIFQSFNLVKRSSVLRNVLSGRVGYHGTLRTVLNLFPKQDVELALQALNRVNILEKAYSRASDLSGGQQQRVAIARALAQEPSVILADEPTASLDPLTTKQVMDDLKRINKEDKITTIVNLHFIDLAREYATRIIGLRAGEVVFDGPVSEATDEKFAEIYGRPIQEDELLGEELDEPASEHASQ</sequence>
<accession>Q5WIL7</accession>
<dbReference type="EC" id="7.3.2.2" evidence="1"/>
<dbReference type="EMBL" id="AP006627">
    <property type="protein sequence ID" value="BAD63788.1"/>
    <property type="molecule type" value="Genomic_DNA"/>
</dbReference>
<dbReference type="RefSeq" id="WP_011246101.1">
    <property type="nucleotide sequence ID" value="NC_006582.1"/>
</dbReference>
<dbReference type="SMR" id="Q5WIL7"/>
<dbReference type="STRING" id="66692.ABC1250"/>
<dbReference type="KEGG" id="bcl:ABC1250"/>
<dbReference type="eggNOG" id="COG3638">
    <property type="taxonomic scope" value="Bacteria"/>
</dbReference>
<dbReference type="HOGENOM" id="CLU_000604_1_22_9"/>
<dbReference type="OrthoDB" id="9802264at2"/>
<dbReference type="Proteomes" id="UP000001168">
    <property type="component" value="Chromosome"/>
</dbReference>
<dbReference type="GO" id="GO:0005886">
    <property type="term" value="C:plasma membrane"/>
    <property type="evidence" value="ECO:0007669"/>
    <property type="project" value="UniProtKB-SubCell"/>
</dbReference>
<dbReference type="GO" id="GO:0015416">
    <property type="term" value="F:ABC-type phosphonate transporter activity"/>
    <property type="evidence" value="ECO:0007669"/>
    <property type="project" value="UniProtKB-EC"/>
</dbReference>
<dbReference type="GO" id="GO:0005524">
    <property type="term" value="F:ATP binding"/>
    <property type="evidence" value="ECO:0007669"/>
    <property type="project" value="UniProtKB-KW"/>
</dbReference>
<dbReference type="GO" id="GO:0016887">
    <property type="term" value="F:ATP hydrolysis activity"/>
    <property type="evidence" value="ECO:0007669"/>
    <property type="project" value="InterPro"/>
</dbReference>
<dbReference type="CDD" id="cd03256">
    <property type="entry name" value="ABC_PhnC_transporter"/>
    <property type="match status" value="1"/>
</dbReference>
<dbReference type="Gene3D" id="3.40.50.300">
    <property type="entry name" value="P-loop containing nucleotide triphosphate hydrolases"/>
    <property type="match status" value="1"/>
</dbReference>
<dbReference type="InterPro" id="IPR003593">
    <property type="entry name" value="AAA+_ATPase"/>
</dbReference>
<dbReference type="InterPro" id="IPR003439">
    <property type="entry name" value="ABC_transporter-like_ATP-bd"/>
</dbReference>
<dbReference type="InterPro" id="IPR017871">
    <property type="entry name" value="ABC_transporter-like_CS"/>
</dbReference>
<dbReference type="InterPro" id="IPR012693">
    <property type="entry name" value="ABC_transpr_PhnC"/>
</dbReference>
<dbReference type="InterPro" id="IPR050086">
    <property type="entry name" value="MetN_ABC_transporter-like"/>
</dbReference>
<dbReference type="InterPro" id="IPR027417">
    <property type="entry name" value="P-loop_NTPase"/>
</dbReference>
<dbReference type="NCBIfam" id="TIGR02315">
    <property type="entry name" value="ABC_phnC"/>
    <property type="match status" value="1"/>
</dbReference>
<dbReference type="PANTHER" id="PTHR43166">
    <property type="entry name" value="AMINO ACID IMPORT ATP-BINDING PROTEIN"/>
    <property type="match status" value="1"/>
</dbReference>
<dbReference type="PANTHER" id="PTHR43166:SF6">
    <property type="entry name" value="PHOSPHONATES IMPORT ATP-BINDING PROTEIN PHNC"/>
    <property type="match status" value="1"/>
</dbReference>
<dbReference type="Pfam" id="PF00005">
    <property type="entry name" value="ABC_tran"/>
    <property type="match status" value="1"/>
</dbReference>
<dbReference type="SMART" id="SM00382">
    <property type="entry name" value="AAA"/>
    <property type="match status" value="1"/>
</dbReference>
<dbReference type="SUPFAM" id="SSF52540">
    <property type="entry name" value="P-loop containing nucleoside triphosphate hydrolases"/>
    <property type="match status" value="1"/>
</dbReference>
<dbReference type="PROSITE" id="PS00211">
    <property type="entry name" value="ABC_TRANSPORTER_1"/>
    <property type="match status" value="1"/>
</dbReference>
<dbReference type="PROSITE" id="PS50893">
    <property type="entry name" value="ABC_TRANSPORTER_2"/>
    <property type="match status" value="1"/>
</dbReference>
<dbReference type="PROSITE" id="PS51249">
    <property type="entry name" value="PHNC"/>
    <property type="match status" value="1"/>
</dbReference>
<protein>
    <recommendedName>
        <fullName evidence="1">Phosphonates import ATP-binding protein PhnC</fullName>
        <ecNumber evidence="1">7.3.2.2</ecNumber>
    </recommendedName>
</protein>
<evidence type="ECO:0000255" key="1">
    <source>
        <dbReference type="HAMAP-Rule" id="MF_01713"/>
    </source>
</evidence>
<keyword id="KW-0067">ATP-binding</keyword>
<keyword id="KW-1003">Cell membrane</keyword>
<keyword id="KW-0472">Membrane</keyword>
<keyword id="KW-0547">Nucleotide-binding</keyword>
<keyword id="KW-0918">Phosphonate transport</keyword>
<keyword id="KW-1185">Reference proteome</keyword>
<keyword id="KW-1278">Translocase</keyword>
<keyword id="KW-0813">Transport</keyword>